<name>RS21_STRTD</name>
<protein>
    <recommendedName>
        <fullName evidence="1">Small ribosomal subunit protein bS21</fullName>
    </recommendedName>
    <alternativeName>
        <fullName evidence="3">30S ribosomal protein S21</fullName>
    </alternativeName>
</protein>
<organism>
    <name type="scientific">Streptococcus thermophilus (strain ATCC BAA-491 / LMD-9)</name>
    <dbReference type="NCBI Taxonomy" id="322159"/>
    <lineage>
        <taxon>Bacteria</taxon>
        <taxon>Bacillati</taxon>
        <taxon>Bacillota</taxon>
        <taxon>Bacilli</taxon>
        <taxon>Lactobacillales</taxon>
        <taxon>Streptococcaceae</taxon>
        <taxon>Streptococcus</taxon>
    </lineage>
</organism>
<reference key="1">
    <citation type="journal article" date="2006" name="Proc. Natl. Acad. Sci. U.S.A.">
        <title>Comparative genomics of the lactic acid bacteria.</title>
        <authorList>
            <person name="Makarova K.S."/>
            <person name="Slesarev A."/>
            <person name="Wolf Y.I."/>
            <person name="Sorokin A."/>
            <person name="Mirkin B."/>
            <person name="Koonin E.V."/>
            <person name="Pavlov A."/>
            <person name="Pavlova N."/>
            <person name="Karamychev V."/>
            <person name="Polouchine N."/>
            <person name="Shakhova V."/>
            <person name="Grigoriev I."/>
            <person name="Lou Y."/>
            <person name="Rohksar D."/>
            <person name="Lucas S."/>
            <person name="Huang K."/>
            <person name="Goodstein D.M."/>
            <person name="Hawkins T."/>
            <person name="Plengvidhya V."/>
            <person name="Welker D."/>
            <person name="Hughes J."/>
            <person name="Goh Y."/>
            <person name="Benson A."/>
            <person name="Baldwin K."/>
            <person name="Lee J.-H."/>
            <person name="Diaz-Muniz I."/>
            <person name="Dosti B."/>
            <person name="Smeianov V."/>
            <person name="Wechter W."/>
            <person name="Barabote R."/>
            <person name="Lorca G."/>
            <person name="Altermann E."/>
            <person name="Barrangou R."/>
            <person name="Ganesan B."/>
            <person name="Xie Y."/>
            <person name="Rawsthorne H."/>
            <person name="Tamir D."/>
            <person name="Parker C."/>
            <person name="Breidt F."/>
            <person name="Broadbent J.R."/>
            <person name="Hutkins R."/>
            <person name="O'Sullivan D."/>
            <person name="Steele J."/>
            <person name="Unlu G."/>
            <person name="Saier M.H. Jr."/>
            <person name="Klaenhammer T."/>
            <person name="Richardson P."/>
            <person name="Kozyavkin S."/>
            <person name="Weimer B.C."/>
            <person name="Mills D.A."/>
        </authorList>
    </citation>
    <scope>NUCLEOTIDE SEQUENCE [LARGE SCALE GENOMIC DNA]</scope>
    <source>
        <strain>ATCC BAA-491 / LMD-9</strain>
    </source>
</reference>
<proteinExistence type="inferred from homology"/>
<keyword id="KW-0687">Ribonucleoprotein</keyword>
<keyword id="KW-0689">Ribosomal protein</keyword>
<dbReference type="EMBL" id="CP000419">
    <property type="protein sequence ID" value="ABJ66612.1"/>
    <property type="molecule type" value="Genomic_DNA"/>
</dbReference>
<dbReference type="RefSeq" id="WP_011681449.1">
    <property type="nucleotide sequence ID" value="NC_008532.1"/>
</dbReference>
<dbReference type="SMR" id="Q03JL0"/>
<dbReference type="KEGG" id="ste:STER_1451"/>
<dbReference type="HOGENOM" id="CLU_159258_3_2_9"/>
<dbReference type="GO" id="GO:1990904">
    <property type="term" value="C:ribonucleoprotein complex"/>
    <property type="evidence" value="ECO:0007669"/>
    <property type="project" value="UniProtKB-KW"/>
</dbReference>
<dbReference type="GO" id="GO:0005840">
    <property type="term" value="C:ribosome"/>
    <property type="evidence" value="ECO:0007669"/>
    <property type="project" value="UniProtKB-KW"/>
</dbReference>
<dbReference type="GO" id="GO:0003735">
    <property type="term" value="F:structural constituent of ribosome"/>
    <property type="evidence" value="ECO:0007669"/>
    <property type="project" value="InterPro"/>
</dbReference>
<dbReference type="GO" id="GO:0006412">
    <property type="term" value="P:translation"/>
    <property type="evidence" value="ECO:0007669"/>
    <property type="project" value="UniProtKB-UniRule"/>
</dbReference>
<dbReference type="Gene3D" id="1.20.5.1150">
    <property type="entry name" value="Ribosomal protein S8"/>
    <property type="match status" value="1"/>
</dbReference>
<dbReference type="HAMAP" id="MF_00358">
    <property type="entry name" value="Ribosomal_bS21"/>
    <property type="match status" value="1"/>
</dbReference>
<dbReference type="InterPro" id="IPR001911">
    <property type="entry name" value="Ribosomal_bS21"/>
</dbReference>
<dbReference type="InterPro" id="IPR018278">
    <property type="entry name" value="Ribosomal_bS21_CS"/>
</dbReference>
<dbReference type="InterPro" id="IPR038380">
    <property type="entry name" value="Ribosomal_bS21_sf"/>
</dbReference>
<dbReference type="NCBIfam" id="TIGR00030">
    <property type="entry name" value="S21p"/>
    <property type="match status" value="1"/>
</dbReference>
<dbReference type="PANTHER" id="PTHR21109">
    <property type="entry name" value="MITOCHONDRIAL 28S RIBOSOMAL PROTEIN S21"/>
    <property type="match status" value="1"/>
</dbReference>
<dbReference type="PANTHER" id="PTHR21109:SF22">
    <property type="entry name" value="SMALL RIBOSOMAL SUBUNIT PROTEIN BS21"/>
    <property type="match status" value="1"/>
</dbReference>
<dbReference type="Pfam" id="PF01165">
    <property type="entry name" value="Ribosomal_S21"/>
    <property type="match status" value="1"/>
</dbReference>
<dbReference type="PRINTS" id="PR00976">
    <property type="entry name" value="RIBOSOMALS21"/>
</dbReference>
<dbReference type="PROSITE" id="PS01181">
    <property type="entry name" value="RIBOSOMAL_S21"/>
    <property type="match status" value="1"/>
</dbReference>
<accession>Q03JL0</accession>
<feature type="chain" id="PRO_1000005180" description="Small ribosomal subunit protein bS21">
    <location>
        <begin position="1"/>
        <end position="58"/>
    </location>
</feature>
<feature type="region of interest" description="Disordered" evidence="2">
    <location>
        <begin position="25"/>
        <end position="58"/>
    </location>
</feature>
<feature type="compositionally biased region" description="Basic and acidic residues" evidence="2">
    <location>
        <begin position="31"/>
        <end position="42"/>
    </location>
</feature>
<feature type="compositionally biased region" description="Basic residues" evidence="2">
    <location>
        <begin position="43"/>
        <end position="58"/>
    </location>
</feature>
<sequence length="58" mass="6910">MSKVVVRKNESLDDALRRFKRSVTKAGTLQEARKREHYEKPSVKRKRKSEAARKRKKI</sequence>
<evidence type="ECO:0000255" key="1">
    <source>
        <dbReference type="HAMAP-Rule" id="MF_00358"/>
    </source>
</evidence>
<evidence type="ECO:0000256" key="2">
    <source>
        <dbReference type="SAM" id="MobiDB-lite"/>
    </source>
</evidence>
<evidence type="ECO:0000305" key="3"/>
<gene>
    <name evidence="1" type="primary">rpsU</name>
    <name type="ordered locus">STER_1451</name>
</gene>
<comment type="similarity">
    <text evidence="1">Belongs to the bacterial ribosomal protein bS21 family.</text>
</comment>